<reference key="1">
    <citation type="journal article" date="2003" name="J. Bacteriol.">
        <title>Complete genome sequence of the oral pathogenic bacterium Porphyromonas gingivalis strain W83.</title>
        <authorList>
            <person name="Nelson K.E."/>
            <person name="Fleischmann R.D."/>
            <person name="DeBoy R.T."/>
            <person name="Paulsen I.T."/>
            <person name="Fouts D.E."/>
            <person name="Eisen J.A."/>
            <person name="Daugherty S.C."/>
            <person name="Dodson R.J."/>
            <person name="Durkin A.S."/>
            <person name="Gwinn M.L."/>
            <person name="Haft D.H."/>
            <person name="Kolonay J.F."/>
            <person name="Nelson W.C."/>
            <person name="Mason T.M."/>
            <person name="Tallon L."/>
            <person name="Gray J."/>
            <person name="Granger D."/>
            <person name="Tettelin H."/>
            <person name="Dong H."/>
            <person name="Galvin J.L."/>
            <person name="Duncan M.J."/>
            <person name="Dewhirst F.E."/>
            <person name="Fraser C.M."/>
        </authorList>
    </citation>
    <scope>NUCLEOTIDE SEQUENCE [LARGE SCALE GENOMIC DNA]</scope>
    <source>
        <strain>ATCC BAA-308 / W83</strain>
    </source>
</reference>
<sequence>MAKESMKAREVKRAKLVAKYAAKRAALKAEGNYEALQLLPKNASPVRLHNRCSMTGRPKGYMRQFGISRIQFREMASAGLIPGVKKASW</sequence>
<protein>
    <recommendedName>
        <fullName evidence="1">Small ribosomal subunit protein uS14</fullName>
    </recommendedName>
    <alternativeName>
        <fullName evidence="2">30S ribosomal protein S14</fullName>
    </alternativeName>
</protein>
<gene>
    <name evidence="1" type="primary">rpsN</name>
    <name type="ordered locus">PG_1925</name>
</gene>
<name>RS14_PORGI</name>
<dbReference type="EMBL" id="AE015924">
    <property type="protein sequence ID" value="AAQ66906.1"/>
    <property type="molecule type" value="Genomic_DNA"/>
</dbReference>
<dbReference type="RefSeq" id="WP_004583585.1">
    <property type="nucleotide sequence ID" value="NC_002950.2"/>
</dbReference>
<dbReference type="SMR" id="Q7MTM6"/>
<dbReference type="STRING" id="242619.PG_1925"/>
<dbReference type="EnsemblBacteria" id="AAQ66906">
    <property type="protein sequence ID" value="AAQ66906"/>
    <property type="gene ID" value="PG_1925"/>
</dbReference>
<dbReference type="GeneID" id="29257006"/>
<dbReference type="GeneID" id="57239583"/>
<dbReference type="KEGG" id="pgi:PG_1925"/>
<dbReference type="eggNOG" id="COG0199">
    <property type="taxonomic scope" value="Bacteria"/>
</dbReference>
<dbReference type="HOGENOM" id="CLU_139869_0_0_10"/>
<dbReference type="Proteomes" id="UP000000588">
    <property type="component" value="Chromosome"/>
</dbReference>
<dbReference type="GO" id="GO:0005737">
    <property type="term" value="C:cytoplasm"/>
    <property type="evidence" value="ECO:0007669"/>
    <property type="project" value="UniProtKB-ARBA"/>
</dbReference>
<dbReference type="GO" id="GO:0015935">
    <property type="term" value="C:small ribosomal subunit"/>
    <property type="evidence" value="ECO:0007669"/>
    <property type="project" value="TreeGrafter"/>
</dbReference>
<dbReference type="GO" id="GO:0019843">
    <property type="term" value="F:rRNA binding"/>
    <property type="evidence" value="ECO:0007669"/>
    <property type="project" value="UniProtKB-UniRule"/>
</dbReference>
<dbReference type="GO" id="GO:0003735">
    <property type="term" value="F:structural constituent of ribosome"/>
    <property type="evidence" value="ECO:0007669"/>
    <property type="project" value="InterPro"/>
</dbReference>
<dbReference type="GO" id="GO:0006412">
    <property type="term" value="P:translation"/>
    <property type="evidence" value="ECO:0007669"/>
    <property type="project" value="UniProtKB-UniRule"/>
</dbReference>
<dbReference type="FunFam" id="1.10.287.1480:FF:000001">
    <property type="entry name" value="30S ribosomal protein S14"/>
    <property type="match status" value="1"/>
</dbReference>
<dbReference type="Gene3D" id="4.10.830.10">
    <property type="entry name" value="30s Ribosomal Protein S14, Chain N"/>
    <property type="match status" value="1"/>
</dbReference>
<dbReference type="HAMAP" id="MF_00537">
    <property type="entry name" value="Ribosomal_uS14_1"/>
    <property type="match status" value="1"/>
</dbReference>
<dbReference type="InterPro" id="IPR001209">
    <property type="entry name" value="Ribosomal_uS14"/>
</dbReference>
<dbReference type="InterPro" id="IPR023036">
    <property type="entry name" value="Ribosomal_uS14_bac/plastid"/>
</dbReference>
<dbReference type="InterPro" id="IPR018271">
    <property type="entry name" value="Ribosomal_uS14_CS"/>
</dbReference>
<dbReference type="InterPro" id="IPR043140">
    <property type="entry name" value="Ribosomal_uS14_sf"/>
</dbReference>
<dbReference type="NCBIfam" id="NF006477">
    <property type="entry name" value="PRK08881.1"/>
    <property type="match status" value="1"/>
</dbReference>
<dbReference type="PANTHER" id="PTHR19836">
    <property type="entry name" value="30S RIBOSOMAL PROTEIN S14"/>
    <property type="match status" value="1"/>
</dbReference>
<dbReference type="PANTHER" id="PTHR19836:SF19">
    <property type="entry name" value="SMALL RIBOSOMAL SUBUNIT PROTEIN US14M"/>
    <property type="match status" value="1"/>
</dbReference>
<dbReference type="Pfam" id="PF00253">
    <property type="entry name" value="Ribosomal_S14"/>
    <property type="match status" value="1"/>
</dbReference>
<dbReference type="SUPFAM" id="SSF57716">
    <property type="entry name" value="Glucocorticoid receptor-like (DNA-binding domain)"/>
    <property type="match status" value="1"/>
</dbReference>
<dbReference type="PROSITE" id="PS00527">
    <property type="entry name" value="RIBOSOMAL_S14"/>
    <property type="match status" value="1"/>
</dbReference>
<evidence type="ECO:0000255" key="1">
    <source>
        <dbReference type="HAMAP-Rule" id="MF_00537"/>
    </source>
</evidence>
<evidence type="ECO:0000305" key="2"/>
<comment type="function">
    <text evidence="1">Binds 16S rRNA, required for the assembly of 30S particles and may also be responsible for determining the conformation of the 16S rRNA at the A site.</text>
</comment>
<comment type="subunit">
    <text evidence="1">Part of the 30S ribosomal subunit. Contacts proteins S3 and S10.</text>
</comment>
<comment type="similarity">
    <text evidence="1">Belongs to the universal ribosomal protein uS14 family.</text>
</comment>
<proteinExistence type="inferred from homology"/>
<organism>
    <name type="scientific">Porphyromonas gingivalis (strain ATCC BAA-308 / W83)</name>
    <dbReference type="NCBI Taxonomy" id="242619"/>
    <lineage>
        <taxon>Bacteria</taxon>
        <taxon>Pseudomonadati</taxon>
        <taxon>Bacteroidota</taxon>
        <taxon>Bacteroidia</taxon>
        <taxon>Bacteroidales</taxon>
        <taxon>Porphyromonadaceae</taxon>
        <taxon>Porphyromonas</taxon>
    </lineage>
</organism>
<accession>Q7MTM6</accession>
<feature type="chain" id="PRO_1000128494" description="Small ribosomal subunit protein uS14">
    <location>
        <begin position="1"/>
        <end position="89"/>
    </location>
</feature>
<keyword id="KW-1185">Reference proteome</keyword>
<keyword id="KW-0687">Ribonucleoprotein</keyword>
<keyword id="KW-0689">Ribosomal protein</keyword>
<keyword id="KW-0694">RNA-binding</keyword>
<keyword id="KW-0699">rRNA-binding</keyword>